<sequence>MGLTLLLLLLLGLEGQGIVGSLPEVLQAPVGSSILVQCHYRLQDVKAQKVWCRFLPEGCQPLVSSAVDRRAPAGRRTFLTDLGGGLLQVEMVTLQEEDAGEYGCMVDGARGPQILHRVSLNILPPEEEEETHKIGSLAENAFSDPAGSANPLEPSQDEKSIPLIWGAVLLVGLLVAAVVLFAVMAKRKQGNRLGVCGRFLSSRVSGMNPSSVVHHVSDSGPAAELPLDVPHIRLDSPPSFDNTTYTSLPLDSPSGKPSLPAPSSLPPLPPKVLVCSKPVTYATVIFPGGNKGGGTSCGPAQNPPNNQTPSS</sequence>
<proteinExistence type="evidence at protein level"/>
<keyword id="KW-0002">3D-structure</keyword>
<keyword id="KW-0025">Alternative splicing</keyword>
<keyword id="KW-1003">Cell membrane</keyword>
<keyword id="KW-0963">Cytoplasm</keyword>
<keyword id="KW-1015">Disulfide bond</keyword>
<keyword id="KW-0393">Immunoglobulin domain</keyword>
<keyword id="KW-0449">Lipoprotein</keyword>
<keyword id="KW-0472">Membrane</keyword>
<keyword id="KW-0564">Palmitate</keyword>
<keyword id="KW-0597">Phosphoprotein</keyword>
<keyword id="KW-1267">Proteomics identification</keyword>
<keyword id="KW-0675">Receptor</keyword>
<keyword id="KW-1185">Reference proteome</keyword>
<keyword id="KW-0732">Signal</keyword>
<keyword id="KW-0812">Transmembrane</keyword>
<keyword id="KW-1133">Transmembrane helix</keyword>
<reference key="1">
    <citation type="journal article" date="2002" name="Blood">
        <title>Initial characterization of TREM-like transcript (TLT)-1: a putative inhibitory receptor within the TREM cluster.</title>
        <authorList>
            <person name="Washington A.V."/>
            <person name="Quigley L."/>
            <person name="McVicar D.W."/>
        </authorList>
    </citation>
    <scope>NUCLEOTIDE SEQUENCE [MRNA] (ISOFORM 1)</scope>
</reference>
<reference key="2">
    <citation type="journal article" date="2003" name="Eur. J. Immunol.">
        <title>The human TREM gene cluster at 6p21.1 encodes both activating and inhibitory single IgV domain receptors and includes NKp44.</title>
        <authorList>
            <person name="Allcock R.J.N."/>
            <person name="Barrow A.D."/>
            <person name="Forbes S."/>
            <person name="Beck S."/>
            <person name="Trowsdale J."/>
        </authorList>
    </citation>
    <scope>NUCLEOTIDE SEQUENCE [MRNA] (ISOFORMS 1 AND 2)</scope>
    <scope>TISSUE SPECIFICITY</scope>
</reference>
<reference key="3">
    <citation type="journal article" date="2003" name="Genome Res.">
        <title>The secreted protein discovery initiative (SPDI), a large-scale effort to identify novel human secreted and transmembrane proteins: a bioinformatics assessment.</title>
        <authorList>
            <person name="Clark H.F."/>
            <person name="Gurney A.L."/>
            <person name="Abaya E."/>
            <person name="Baker K."/>
            <person name="Baldwin D.T."/>
            <person name="Brush J."/>
            <person name="Chen J."/>
            <person name="Chow B."/>
            <person name="Chui C."/>
            <person name="Crowley C."/>
            <person name="Currell B."/>
            <person name="Deuel B."/>
            <person name="Dowd P."/>
            <person name="Eaton D."/>
            <person name="Foster J.S."/>
            <person name="Grimaldi C."/>
            <person name="Gu Q."/>
            <person name="Hass P.E."/>
            <person name="Heldens S."/>
            <person name="Huang A."/>
            <person name="Kim H.S."/>
            <person name="Klimowski L."/>
            <person name="Jin Y."/>
            <person name="Johnson S."/>
            <person name="Lee J."/>
            <person name="Lewis L."/>
            <person name="Liao D."/>
            <person name="Mark M.R."/>
            <person name="Robbie E."/>
            <person name="Sanchez C."/>
            <person name="Schoenfeld J."/>
            <person name="Seshagiri S."/>
            <person name="Simmons L."/>
            <person name="Singh J."/>
            <person name="Smith V."/>
            <person name="Stinson J."/>
            <person name="Vagts A."/>
            <person name="Vandlen R.L."/>
            <person name="Watanabe C."/>
            <person name="Wieand D."/>
            <person name="Woods K."/>
            <person name="Xie M.-H."/>
            <person name="Yansura D.G."/>
            <person name="Yi S."/>
            <person name="Yu G."/>
            <person name="Yuan J."/>
            <person name="Zhang M."/>
            <person name="Zhang Z."/>
            <person name="Goddard A.D."/>
            <person name="Wood W.I."/>
            <person name="Godowski P.J."/>
            <person name="Gray A.M."/>
        </authorList>
    </citation>
    <scope>NUCLEOTIDE SEQUENCE [LARGE SCALE MRNA] (ISOFORM 2)</scope>
</reference>
<reference key="4">
    <citation type="journal article" date="2003" name="Nature">
        <title>The DNA sequence and analysis of human chromosome 6.</title>
        <authorList>
            <person name="Mungall A.J."/>
            <person name="Palmer S.A."/>
            <person name="Sims S.K."/>
            <person name="Edwards C.A."/>
            <person name="Ashurst J.L."/>
            <person name="Wilming L."/>
            <person name="Jones M.C."/>
            <person name="Horton R."/>
            <person name="Hunt S.E."/>
            <person name="Scott C.E."/>
            <person name="Gilbert J.G.R."/>
            <person name="Clamp M.E."/>
            <person name="Bethel G."/>
            <person name="Milne S."/>
            <person name="Ainscough R."/>
            <person name="Almeida J.P."/>
            <person name="Ambrose K.D."/>
            <person name="Andrews T.D."/>
            <person name="Ashwell R.I.S."/>
            <person name="Babbage A.K."/>
            <person name="Bagguley C.L."/>
            <person name="Bailey J."/>
            <person name="Banerjee R."/>
            <person name="Barker D.J."/>
            <person name="Barlow K.F."/>
            <person name="Bates K."/>
            <person name="Beare D.M."/>
            <person name="Beasley H."/>
            <person name="Beasley O."/>
            <person name="Bird C.P."/>
            <person name="Blakey S.E."/>
            <person name="Bray-Allen S."/>
            <person name="Brook J."/>
            <person name="Brown A.J."/>
            <person name="Brown J.Y."/>
            <person name="Burford D.C."/>
            <person name="Burrill W."/>
            <person name="Burton J."/>
            <person name="Carder C."/>
            <person name="Carter N.P."/>
            <person name="Chapman J.C."/>
            <person name="Clark S.Y."/>
            <person name="Clark G."/>
            <person name="Clee C.M."/>
            <person name="Clegg S."/>
            <person name="Cobley V."/>
            <person name="Collier R.E."/>
            <person name="Collins J.E."/>
            <person name="Colman L.K."/>
            <person name="Corby N.R."/>
            <person name="Coville G.J."/>
            <person name="Culley K.M."/>
            <person name="Dhami P."/>
            <person name="Davies J."/>
            <person name="Dunn M."/>
            <person name="Earthrowl M.E."/>
            <person name="Ellington A.E."/>
            <person name="Evans K.A."/>
            <person name="Faulkner L."/>
            <person name="Francis M.D."/>
            <person name="Frankish A."/>
            <person name="Frankland J."/>
            <person name="French L."/>
            <person name="Garner P."/>
            <person name="Garnett J."/>
            <person name="Ghori M.J."/>
            <person name="Gilby L.M."/>
            <person name="Gillson C.J."/>
            <person name="Glithero R.J."/>
            <person name="Grafham D.V."/>
            <person name="Grant M."/>
            <person name="Gribble S."/>
            <person name="Griffiths C."/>
            <person name="Griffiths M.N.D."/>
            <person name="Hall R."/>
            <person name="Halls K.S."/>
            <person name="Hammond S."/>
            <person name="Harley J.L."/>
            <person name="Hart E.A."/>
            <person name="Heath P.D."/>
            <person name="Heathcott R."/>
            <person name="Holmes S.J."/>
            <person name="Howden P.J."/>
            <person name="Howe K.L."/>
            <person name="Howell G.R."/>
            <person name="Huckle E."/>
            <person name="Humphray S.J."/>
            <person name="Humphries M.D."/>
            <person name="Hunt A.R."/>
            <person name="Johnson C.M."/>
            <person name="Joy A.A."/>
            <person name="Kay M."/>
            <person name="Keenan S.J."/>
            <person name="Kimberley A.M."/>
            <person name="King A."/>
            <person name="Laird G.K."/>
            <person name="Langford C."/>
            <person name="Lawlor S."/>
            <person name="Leongamornlert D.A."/>
            <person name="Leversha M."/>
            <person name="Lloyd C.R."/>
            <person name="Lloyd D.M."/>
            <person name="Loveland J.E."/>
            <person name="Lovell J."/>
            <person name="Martin S."/>
            <person name="Mashreghi-Mohammadi M."/>
            <person name="Maslen G.L."/>
            <person name="Matthews L."/>
            <person name="McCann O.T."/>
            <person name="McLaren S.J."/>
            <person name="McLay K."/>
            <person name="McMurray A."/>
            <person name="Moore M.J.F."/>
            <person name="Mullikin J.C."/>
            <person name="Niblett D."/>
            <person name="Nickerson T."/>
            <person name="Novik K.L."/>
            <person name="Oliver K."/>
            <person name="Overton-Larty E.K."/>
            <person name="Parker A."/>
            <person name="Patel R."/>
            <person name="Pearce A.V."/>
            <person name="Peck A.I."/>
            <person name="Phillimore B.J.C.T."/>
            <person name="Phillips S."/>
            <person name="Plumb R.W."/>
            <person name="Porter K.M."/>
            <person name="Ramsey Y."/>
            <person name="Ranby S.A."/>
            <person name="Rice C.M."/>
            <person name="Ross M.T."/>
            <person name="Searle S.M."/>
            <person name="Sehra H.K."/>
            <person name="Sheridan E."/>
            <person name="Skuce C.D."/>
            <person name="Smith S."/>
            <person name="Smith M."/>
            <person name="Spraggon L."/>
            <person name="Squares S.L."/>
            <person name="Steward C.A."/>
            <person name="Sycamore N."/>
            <person name="Tamlyn-Hall G."/>
            <person name="Tester J."/>
            <person name="Theaker A.J."/>
            <person name="Thomas D.W."/>
            <person name="Thorpe A."/>
            <person name="Tracey A."/>
            <person name="Tromans A."/>
            <person name="Tubby B."/>
            <person name="Wall M."/>
            <person name="Wallis J.M."/>
            <person name="West A.P."/>
            <person name="White S.S."/>
            <person name="Whitehead S.L."/>
            <person name="Whittaker H."/>
            <person name="Wild A."/>
            <person name="Willey D.J."/>
            <person name="Wilmer T.E."/>
            <person name="Wood J.M."/>
            <person name="Wray P.W."/>
            <person name="Wyatt J.C."/>
            <person name="Young L."/>
            <person name="Younger R.M."/>
            <person name="Bentley D.R."/>
            <person name="Coulson A."/>
            <person name="Durbin R.M."/>
            <person name="Hubbard T."/>
            <person name="Sulston J.E."/>
            <person name="Dunham I."/>
            <person name="Rogers J."/>
            <person name="Beck S."/>
        </authorList>
    </citation>
    <scope>NUCLEOTIDE SEQUENCE [LARGE SCALE GENOMIC DNA]</scope>
</reference>
<reference key="5">
    <citation type="journal article" date="2004" name="Genome Res.">
        <title>The status, quality, and expansion of the NIH full-length cDNA project: the Mammalian Gene Collection (MGC).</title>
        <authorList>
            <consortium name="The MGC Project Team"/>
        </authorList>
    </citation>
    <scope>NUCLEOTIDE SEQUENCE [LARGE SCALE MRNA] (ISOFORMS 1 AND 3)</scope>
</reference>
<reference key="6">
    <citation type="journal article" date="2004" name="Blood">
        <title>A TREM family member, TLT-1, is found exclusively in the alpha-granules of megakaryocytes and platelets.</title>
        <authorList>
            <person name="Washington A.V."/>
            <person name="Schubert R.L."/>
            <person name="Quigley L."/>
            <person name="Disipio T."/>
            <person name="Feltz R."/>
            <person name="Cho E.H."/>
            <person name="McVicar D.W."/>
        </authorList>
    </citation>
    <scope>SUBCELLULAR LOCATION</scope>
    <scope>TISSUE SPECIFICITY</scope>
</reference>
<reference key="7">
    <citation type="journal article" date="2004" name="J. Immunol.">
        <title>TREM-like transcript-1, a platelet immunoreceptor tyrosine-based inhibition motif encoding costimulatory immunoreceptor that enhances, rather than inhibits, calcium signaling via SHP-2.</title>
        <authorList>
            <person name="Barrow A.D."/>
            <person name="Astoul E."/>
            <person name="Floto A."/>
            <person name="Brooke G."/>
            <person name="Relou I.A.M."/>
            <person name="Jennings N.S."/>
            <person name="Smith K.G.C."/>
            <person name="Ouwehand W."/>
            <person name="Farndale R.W."/>
            <person name="Alexander D.R."/>
            <person name="Trowsdale J."/>
        </authorList>
    </citation>
    <scope>FUNCTION</scope>
    <scope>PHOSPHORYLATION</scope>
    <scope>INTERACTION WITH PTPN11</scope>
    <scope>ALTERNATIVE SPLICING</scope>
    <scope>TISSUE SPECIFICITY</scope>
</reference>
<reference key="8">
    <citation type="journal article" date="2011" name="Blood">
        <title>Proteomic analysis of palmitoylated platelet proteins.</title>
        <authorList>
            <person name="Dowal L."/>
            <person name="Yang W."/>
            <person name="Freeman M.R."/>
            <person name="Steen H."/>
            <person name="Flaumenhaft R."/>
        </authorList>
    </citation>
    <scope>PALMITOYLATION AT CYS-196</scope>
    <source>
        <tissue>Platelet</tissue>
    </source>
</reference>
<reference key="9">
    <citation type="journal article" date="2006" name="J. Biol. Chem.">
        <title>The structure of the extracellular domain of triggering receptor expressed on myeloid cells like transcript-1 and evidence for a naturally occurring soluble fragment.</title>
        <authorList>
            <person name="Gattis J.L."/>
            <person name="Washington A.V."/>
            <person name="Chisholm M.M."/>
            <person name="Quigley L."/>
            <person name="Szyk A."/>
            <person name="McVicar D.W."/>
            <person name="Lubkowski J."/>
        </authorList>
    </citation>
    <scope>X-RAY CRYSTALLOGRAPHY (1.19 ANGSTROMS) OF 20-125</scope>
    <scope>DISULFIDE BONDS</scope>
    <scope>TISSUE SPECIFICITY</scope>
    <scope>SUBCELLULAR LOCATION</scope>
</reference>
<reference key="10">
    <citation type="journal article" date="2006" name="Science">
        <title>The consensus coding sequences of human breast and colorectal cancers.</title>
        <authorList>
            <person name="Sjoeblom T."/>
            <person name="Jones S."/>
            <person name="Wood L.D."/>
            <person name="Parsons D.W."/>
            <person name="Lin J."/>
            <person name="Barber T.D."/>
            <person name="Mandelker D."/>
            <person name="Leary R.J."/>
            <person name="Ptak J."/>
            <person name="Silliman N."/>
            <person name="Szabo S."/>
            <person name="Buckhaults P."/>
            <person name="Farrell C."/>
            <person name="Meeh P."/>
            <person name="Markowitz S.D."/>
            <person name="Willis J."/>
            <person name="Dawson D."/>
            <person name="Willson J.K.V."/>
            <person name="Gazdar A.F."/>
            <person name="Hartigan J."/>
            <person name="Wu L."/>
            <person name="Liu C."/>
            <person name="Parmigiani G."/>
            <person name="Park B.H."/>
            <person name="Bachman K.E."/>
            <person name="Papadopoulos N."/>
            <person name="Vogelstein B."/>
            <person name="Kinzler K.W."/>
            <person name="Velculescu V.E."/>
        </authorList>
    </citation>
    <scope>VARIANT [LARGE SCALE ANALYSIS] VAL-6</scope>
</reference>
<feature type="signal peptide" evidence="2">
    <location>
        <begin position="1"/>
        <end position="15"/>
    </location>
</feature>
<feature type="chain" id="PRO_0000253855" description="Trem-like transcript 1 protein">
    <location>
        <begin position="16"/>
        <end position="311"/>
    </location>
</feature>
<feature type="topological domain" description="Extracellular" evidence="2">
    <location>
        <begin position="16"/>
        <end position="162"/>
    </location>
</feature>
<feature type="transmembrane region" description="Helical" evidence="2">
    <location>
        <begin position="163"/>
        <end position="183"/>
    </location>
</feature>
<feature type="topological domain" description="Cytoplasmic" evidence="2">
    <location>
        <begin position="184"/>
        <end position="311"/>
    </location>
</feature>
<feature type="domain" description="Ig-like V-type">
    <location>
        <begin position="16"/>
        <end position="121"/>
    </location>
</feature>
<feature type="region of interest" description="Disordered" evidence="3">
    <location>
        <begin position="229"/>
        <end position="263"/>
    </location>
</feature>
<feature type="region of interest" description="Disordered" evidence="3">
    <location>
        <begin position="287"/>
        <end position="311"/>
    </location>
</feature>
<feature type="short sequence motif" description="ITIM">
    <location>
        <begin position="279"/>
        <end position="284"/>
    </location>
</feature>
<feature type="compositionally biased region" description="Polar residues" evidence="3">
    <location>
        <begin position="239"/>
        <end position="249"/>
    </location>
</feature>
<feature type="lipid moiety-binding region" description="S-palmitoyl cysteine" evidence="9">
    <location>
        <position position="196"/>
    </location>
</feature>
<feature type="disulfide bond" evidence="7">
    <location>
        <begin position="38"/>
        <end position="104"/>
    </location>
</feature>
<feature type="disulfide bond" evidence="7">
    <location>
        <begin position="52"/>
        <end position="59"/>
    </location>
</feature>
<feature type="splice variant" id="VSP_021124" description="In isoform 3." evidence="12">
    <location>
        <begin position="15"/>
        <end position="125"/>
    </location>
</feature>
<feature type="splice variant" id="VSP_021125" description="In isoform 2." evidence="10 11">
    <original>GNRLGVCGRF</original>
    <variation>ESLLSGPPRQ</variation>
    <location>
        <begin position="190"/>
        <end position="199"/>
    </location>
</feature>
<feature type="splice variant" id="VSP_021126" description="In isoform 2." evidence="10 11">
    <location>
        <begin position="200"/>
        <end position="311"/>
    </location>
</feature>
<feature type="sequence variant" id="VAR_035526" description="In a breast cancer sample; somatic mutation." evidence="8">
    <original>L</original>
    <variation>V</variation>
    <location>
        <position position="6"/>
    </location>
</feature>
<feature type="sequence variant" id="VAR_049950" description="In dbSNP:rs34254490.">
    <original>H</original>
    <variation>P</variation>
    <location>
        <position position="231"/>
    </location>
</feature>
<feature type="strand" evidence="13">
    <location>
        <begin position="24"/>
        <end position="28"/>
    </location>
</feature>
<feature type="strand" evidence="13">
    <location>
        <begin position="34"/>
        <end position="39"/>
    </location>
</feature>
<feature type="helix" evidence="13">
    <location>
        <begin position="42"/>
        <end position="44"/>
    </location>
</feature>
<feature type="strand" evidence="13">
    <location>
        <begin position="47"/>
        <end position="55"/>
    </location>
</feature>
<feature type="strand" evidence="13">
    <location>
        <begin position="58"/>
        <end position="64"/>
    </location>
</feature>
<feature type="strand" evidence="13">
    <location>
        <begin position="70"/>
        <end position="73"/>
    </location>
</feature>
<feature type="turn" evidence="13">
    <location>
        <begin position="74"/>
        <end position="76"/>
    </location>
</feature>
<feature type="strand" evidence="13">
    <location>
        <begin position="77"/>
        <end position="83"/>
    </location>
</feature>
<feature type="strand" evidence="13">
    <location>
        <begin position="86"/>
        <end position="91"/>
    </location>
</feature>
<feature type="helix" evidence="13">
    <location>
        <begin position="96"/>
        <end position="98"/>
    </location>
</feature>
<feature type="strand" evidence="13">
    <location>
        <begin position="100"/>
        <end position="108"/>
    </location>
</feature>
<feature type="strand" evidence="13">
    <location>
        <begin position="111"/>
        <end position="122"/>
    </location>
</feature>
<feature type="helix" evidence="14">
    <location>
        <begin position="135"/>
        <end position="137"/>
    </location>
</feature>
<feature type="turn" evidence="14">
    <location>
        <begin position="139"/>
        <end position="142"/>
    </location>
</feature>
<name>TRML1_HUMAN</name>
<dbReference type="EMBL" id="AF508193">
    <property type="protein sequence ID" value="AAO37827.1"/>
    <property type="status" value="ALT_TERM"/>
    <property type="molecule type" value="mRNA"/>
</dbReference>
<dbReference type="EMBL" id="AF534822">
    <property type="protein sequence ID" value="AAO15020.1"/>
    <property type="molecule type" value="mRNA"/>
</dbReference>
<dbReference type="EMBL" id="AF534823">
    <property type="protein sequence ID" value="AAO15021.1"/>
    <property type="molecule type" value="mRNA"/>
</dbReference>
<dbReference type="EMBL" id="AY358357">
    <property type="protein sequence ID" value="AAQ88723.1"/>
    <property type="molecule type" value="mRNA"/>
</dbReference>
<dbReference type="EMBL" id="AL133404">
    <property type="status" value="NOT_ANNOTATED_CDS"/>
    <property type="molecule type" value="Genomic_DNA"/>
</dbReference>
<dbReference type="EMBL" id="BC100944">
    <property type="protein sequence ID" value="AAI00945.1"/>
    <property type="molecule type" value="mRNA"/>
</dbReference>
<dbReference type="EMBL" id="BC100945">
    <property type="protein sequence ID" value="AAI00946.1"/>
    <property type="molecule type" value="mRNA"/>
</dbReference>
<dbReference type="EMBL" id="BC100946">
    <property type="protein sequence ID" value="AAI00947.1"/>
    <property type="molecule type" value="mRNA"/>
</dbReference>
<dbReference type="CCDS" id="CCDS4851.1">
    <molecule id="Q86YW5-1"/>
</dbReference>
<dbReference type="CCDS" id="CCDS64420.1">
    <molecule id="Q86YW5-3"/>
</dbReference>
<dbReference type="CCDS" id="CCDS64421.1">
    <molecule id="Q86YW5-2"/>
</dbReference>
<dbReference type="RefSeq" id="NP_001258736.1">
    <molecule id="Q86YW5-2"/>
    <property type="nucleotide sequence ID" value="NM_001271807.1"/>
</dbReference>
<dbReference type="RefSeq" id="NP_001258737.1">
    <molecule id="Q86YW5-3"/>
    <property type="nucleotide sequence ID" value="NM_001271808.1"/>
</dbReference>
<dbReference type="RefSeq" id="NP_835468.1">
    <molecule id="Q86YW5-1"/>
    <property type="nucleotide sequence ID" value="NM_178174.4"/>
</dbReference>
<dbReference type="RefSeq" id="XP_016866312.1">
    <molecule id="Q86YW5-1"/>
    <property type="nucleotide sequence ID" value="XM_017010823.2"/>
</dbReference>
<dbReference type="RefSeq" id="XP_016866313.1">
    <property type="nucleotide sequence ID" value="XM_017010824.1"/>
</dbReference>
<dbReference type="RefSeq" id="XP_054211296.1">
    <molecule id="Q86YW5-1"/>
    <property type="nucleotide sequence ID" value="XM_054355321.1"/>
</dbReference>
<dbReference type="PDB" id="2FRG">
    <property type="method" value="X-ray"/>
    <property type="resolution" value="1.19 A"/>
    <property type="chains" value="P=20-125"/>
</dbReference>
<dbReference type="PDB" id="8CHE">
    <property type="method" value="X-ray"/>
    <property type="resolution" value="1.49 A"/>
    <property type="chains" value="C/D=126-162"/>
</dbReference>
<dbReference type="PDBsum" id="2FRG"/>
<dbReference type="PDBsum" id="8CHE"/>
<dbReference type="SMR" id="Q86YW5"/>
<dbReference type="BioGRID" id="131013">
    <property type="interactions" value="9"/>
</dbReference>
<dbReference type="ELM" id="Q86YW5"/>
<dbReference type="FunCoup" id="Q86YW5">
    <property type="interactions" value="26"/>
</dbReference>
<dbReference type="IntAct" id="Q86YW5">
    <property type="interactions" value="5"/>
</dbReference>
<dbReference type="STRING" id="9606.ENSP00000402855"/>
<dbReference type="GlyCosmos" id="Q86YW5">
    <property type="glycosylation" value="1 site, 1 glycan"/>
</dbReference>
<dbReference type="GlyGen" id="Q86YW5">
    <property type="glycosylation" value="1 site, 1 O-linked glycan (1 site)"/>
</dbReference>
<dbReference type="iPTMnet" id="Q86YW5"/>
<dbReference type="PhosphoSitePlus" id="Q86YW5"/>
<dbReference type="SwissPalm" id="Q86YW5"/>
<dbReference type="BioMuta" id="TREML1"/>
<dbReference type="DMDM" id="116256098"/>
<dbReference type="MassIVE" id="Q86YW5"/>
<dbReference type="PaxDb" id="9606-ENSP00000402855"/>
<dbReference type="PeptideAtlas" id="Q86YW5"/>
<dbReference type="ProteomicsDB" id="70482">
    <molecule id="Q86YW5-1"/>
</dbReference>
<dbReference type="ProteomicsDB" id="70483">
    <molecule id="Q86YW5-2"/>
</dbReference>
<dbReference type="ProteomicsDB" id="70484">
    <molecule id="Q86YW5-3"/>
</dbReference>
<dbReference type="ABCD" id="Q86YW5">
    <property type="antibodies" value="6 sequenced antibodies"/>
</dbReference>
<dbReference type="Antibodypedia" id="2655">
    <property type="antibodies" value="289 antibodies from 30 providers"/>
</dbReference>
<dbReference type="DNASU" id="340205"/>
<dbReference type="Ensembl" id="ENST00000373127.8">
    <molecule id="Q86YW5-2"/>
    <property type="protein sequence ID" value="ENSP00000362219.4"/>
    <property type="gene ID" value="ENSG00000161911.12"/>
</dbReference>
<dbReference type="Ensembl" id="ENST00000426005.7">
    <molecule id="Q86YW5-1"/>
    <property type="protein sequence ID" value="ENSP00000402855.2"/>
    <property type="gene ID" value="ENSG00000161911.12"/>
</dbReference>
<dbReference type="Ensembl" id="ENST00000437044.2">
    <molecule id="Q86YW5-3"/>
    <property type="protein sequence ID" value="ENSP00000400405.1"/>
    <property type="gene ID" value="ENSG00000161911.12"/>
</dbReference>
<dbReference type="GeneID" id="340205"/>
<dbReference type="KEGG" id="hsa:340205"/>
<dbReference type="MANE-Select" id="ENST00000426005.7">
    <property type="protein sequence ID" value="ENSP00000402855.2"/>
    <property type="RefSeq nucleotide sequence ID" value="NM_178174.4"/>
    <property type="RefSeq protein sequence ID" value="NP_835468.1"/>
</dbReference>
<dbReference type="UCSC" id="uc003opx.5">
    <molecule id="Q86YW5-1"/>
    <property type="organism name" value="human"/>
</dbReference>
<dbReference type="AGR" id="HGNC:20434"/>
<dbReference type="CTD" id="340205"/>
<dbReference type="DisGeNET" id="340205"/>
<dbReference type="GeneCards" id="TREML1"/>
<dbReference type="HGNC" id="HGNC:20434">
    <property type="gene designation" value="TREML1"/>
</dbReference>
<dbReference type="HPA" id="ENSG00000161911">
    <property type="expression patterns" value="Group enriched (bone marrow, brain, choroid plexus, lung, lymphoid tissue)"/>
</dbReference>
<dbReference type="MIM" id="609714">
    <property type="type" value="gene"/>
</dbReference>
<dbReference type="neXtProt" id="NX_Q86YW5"/>
<dbReference type="OpenTargets" id="ENSG00000161911"/>
<dbReference type="PharmGKB" id="PA134878709"/>
<dbReference type="VEuPathDB" id="HostDB:ENSG00000161911"/>
<dbReference type="eggNOG" id="ENOG502SRZV">
    <property type="taxonomic scope" value="Eukaryota"/>
</dbReference>
<dbReference type="GeneTree" id="ENSGT00470000042300"/>
<dbReference type="HOGENOM" id="CLU_077694_1_0_1"/>
<dbReference type="InParanoid" id="Q86YW5"/>
<dbReference type="OMA" id="WCQVLPE"/>
<dbReference type="OrthoDB" id="9449910at2759"/>
<dbReference type="PAN-GO" id="Q86YW5">
    <property type="GO annotations" value="3 GO annotations based on evolutionary models"/>
</dbReference>
<dbReference type="PhylomeDB" id="Q86YW5"/>
<dbReference type="TreeFam" id="TF337145"/>
<dbReference type="PathwayCommons" id="Q86YW5"/>
<dbReference type="Reactome" id="R-HSA-198933">
    <property type="pathway name" value="Immunoregulatory interactions between a Lymphoid and a non-Lymphoid cell"/>
</dbReference>
<dbReference type="SignaLink" id="Q86YW5"/>
<dbReference type="BioGRID-ORCS" id="340205">
    <property type="hits" value="8 hits in 1136 CRISPR screens"/>
</dbReference>
<dbReference type="EvolutionaryTrace" id="Q86YW5"/>
<dbReference type="GeneWiki" id="TREML1"/>
<dbReference type="GenomeRNAi" id="340205"/>
<dbReference type="Pharos" id="Q86YW5">
    <property type="development level" value="Tbio"/>
</dbReference>
<dbReference type="PRO" id="PR:Q86YW5"/>
<dbReference type="Proteomes" id="UP000005640">
    <property type="component" value="Chromosome 6"/>
</dbReference>
<dbReference type="RNAct" id="Q86YW5">
    <property type="molecule type" value="protein"/>
</dbReference>
<dbReference type="Bgee" id="ENSG00000161911">
    <property type="expression patterns" value="Expressed in monocyte and 89 other cell types or tissues"/>
</dbReference>
<dbReference type="GO" id="GO:0009986">
    <property type="term" value="C:cell surface"/>
    <property type="evidence" value="ECO:0000314"/>
    <property type="project" value="UniProtKB"/>
</dbReference>
<dbReference type="GO" id="GO:0005829">
    <property type="term" value="C:cytosol"/>
    <property type="evidence" value="ECO:0000314"/>
    <property type="project" value="HPA"/>
</dbReference>
<dbReference type="GO" id="GO:0005794">
    <property type="term" value="C:Golgi apparatus"/>
    <property type="evidence" value="ECO:0000314"/>
    <property type="project" value="HPA"/>
</dbReference>
<dbReference type="GO" id="GO:0016020">
    <property type="term" value="C:membrane"/>
    <property type="evidence" value="ECO:0000303"/>
    <property type="project" value="UniProtKB"/>
</dbReference>
<dbReference type="GO" id="GO:0016607">
    <property type="term" value="C:nuclear speck"/>
    <property type="evidence" value="ECO:0000314"/>
    <property type="project" value="HPA"/>
</dbReference>
<dbReference type="GO" id="GO:0005886">
    <property type="term" value="C:plasma membrane"/>
    <property type="evidence" value="ECO:0000314"/>
    <property type="project" value="HPA"/>
</dbReference>
<dbReference type="GO" id="GO:0031091">
    <property type="term" value="C:platelet alpha granule"/>
    <property type="evidence" value="ECO:0000314"/>
    <property type="project" value="UniProtKB"/>
</dbReference>
<dbReference type="GO" id="GO:0004888">
    <property type="term" value="F:transmembrane signaling receptor activity"/>
    <property type="evidence" value="ECO:0000318"/>
    <property type="project" value="GO_Central"/>
</dbReference>
<dbReference type="GO" id="GO:0019722">
    <property type="term" value="P:calcium-mediated signaling"/>
    <property type="evidence" value="ECO:0000314"/>
    <property type="project" value="UniProtKB"/>
</dbReference>
<dbReference type="GO" id="GO:0045087">
    <property type="term" value="P:innate immune response"/>
    <property type="evidence" value="ECO:0000303"/>
    <property type="project" value="UniProtKB"/>
</dbReference>
<dbReference type="GO" id="GO:0030168">
    <property type="term" value="P:platelet activation"/>
    <property type="evidence" value="ECO:0000270"/>
    <property type="project" value="UniProtKB"/>
</dbReference>
<dbReference type="GO" id="GO:0007165">
    <property type="term" value="P:signal transduction"/>
    <property type="evidence" value="ECO:0000318"/>
    <property type="project" value="GO_Central"/>
</dbReference>
<dbReference type="CDD" id="cd05716">
    <property type="entry name" value="IgV_pIgR_like"/>
    <property type="match status" value="1"/>
</dbReference>
<dbReference type="FunFam" id="2.60.40.10:FF:001424">
    <property type="entry name" value="Triggering receptor expressed on myeloid cells like 1"/>
    <property type="match status" value="1"/>
</dbReference>
<dbReference type="Gene3D" id="2.60.40.10">
    <property type="entry name" value="Immunoglobulins"/>
    <property type="match status" value="1"/>
</dbReference>
<dbReference type="InterPro" id="IPR036179">
    <property type="entry name" value="Ig-like_dom_sf"/>
</dbReference>
<dbReference type="InterPro" id="IPR013783">
    <property type="entry name" value="Ig-like_fold"/>
</dbReference>
<dbReference type="InterPro" id="IPR052314">
    <property type="entry name" value="Immune_rcpt_domain"/>
</dbReference>
<dbReference type="PANTHER" id="PTHR16423:SF7">
    <property type="entry name" value="NATURAL CYTOTOXICITY TRIGGERING RECEPTOR 2"/>
    <property type="match status" value="1"/>
</dbReference>
<dbReference type="PANTHER" id="PTHR16423">
    <property type="entry name" value="TREM-LIKE TRANSCRIPT PROTEIN"/>
    <property type="match status" value="1"/>
</dbReference>
<dbReference type="SUPFAM" id="SSF48726">
    <property type="entry name" value="Immunoglobulin"/>
    <property type="match status" value="1"/>
</dbReference>
<organism>
    <name type="scientific">Homo sapiens</name>
    <name type="common">Human</name>
    <dbReference type="NCBI Taxonomy" id="9606"/>
    <lineage>
        <taxon>Eukaryota</taxon>
        <taxon>Metazoa</taxon>
        <taxon>Chordata</taxon>
        <taxon>Craniata</taxon>
        <taxon>Vertebrata</taxon>
        <taxon>Euteleostomi</taxon>
        <taxon>Mammalia</taxon>
        <taxon>Eutheria</taxon>
        <taxon>Euarchontoglires</taxon>
        <taxon>Primates</taxon>
        <taxon>Haplorrhini</taxon>
        <taxon>Catarrhini</taxon>
        <taxon>Hominidae</taxon>
        <taxon>Homo</taxon>
    </lineage>
</organism>
<accession>Q86YW5</accession>
<accession>Q496B3</accession>
<accession>Q8IWY1</accession>
<accession>Q8IWY2</accession>
<protein>
    <recommendedName>
        <fullName>Trem-like transcript 1 protein</fullName>
        <shortName>TLT-1</shortName>
    </recommendedName>
    <alternativeName>
        <fullName>Triggering receptor expressed on myeloid cells-like protein 1</fullName>
    </alternativeName>
</protein>
<evidence type="ECO:0000250" key="1"/>
<evidence type="ECO:0000255" key="2"/>
<evidence type="ECO:0000256" key="3">
    <source>
        <dbReference type="SAM" id="MobiDB-lite"/>
    </source>
</evidence>
<evidence type="ECO:0000269" key="4">
    <source>
    </source>
</evidence>
<evidence type="ECO:0000269" key="5">
    <source>
    </source>
</evidence>
<evidence type="ECO:0000269" key="6">
    <source>
    </source>
</evidence>
<evidence type="ECO:0000269" key="7">
    <source>
    </source>
</evidence>
<evidence type="ECO:0000269" key="8">
    <source>
    </source>
</evidence>
<evidence type="ECO:0000269" key="9">
    <source>
    </source>
</evidence>
<evidence type="ECO:0000303" key="10">
    <source>
    </source>
</evidence>
<evidence type="ECO:0000303" key="11">
    <source>
    </source>
</evidence>
<evidence type="ECO:0000303" key="12">
    <source>
    </source>
</evidence>
<evidence type="ECO:0007829" key="13">
    <source>
        <dbReference type="PDB" id="2FRG"/>
    </source>
</evidence>
<evidence type="ECO:0007829" key="14">
    <source>
        <dbReference type="PDB" id="8CHE"/>
    </source>
</evidence>
<gene>
    <name type="primary">TREML1</name>
    <name type="synonym">TLT1</name>
    <name type="ORF">UNQ1825/PRO3438</name>
</gene>
<comment type="function">
    <text evidence="6">Cell surface receptor that may play a role in the innate and adaptive immune response.</text>
</comment>
<comment type="subunit">
    <text evidence="1 6">When phosphorylated, interacts with PTPN6 (By similarity). When phosphorylated, interacts with PTPN11.</text>
</comment>
<comment type="interaction">
    <interactant intactId="EBI-17245072">
        <id>Q86YW5</id>
    </interactant>
    <interactant intactId="EBI-1045825">
        <id>P55061</id>
        <label>TMBIM6</label>
    </interactant>
    <organismsDiffer>false</organismsDiffer>
    <experiments>3</experiments>
</comment>
<comment type="subcellular location">
    <subcellularLocation>
        <location evidence="5">Cell membrane</location>
        <topology evidence="5">Single-pass type I membrane protein</topology>
    </subcellularLocation>
    <subcellularLocation>
        <location evidence="5">Cytoplasm</location>
    </subcellularLocation>
    <text>Sequestered in cytoplasmic vesicles in resting platelets (PubMed:15100151). Transported to the cell surface after stimulation by thrombin (PubMed:15100151). Soluble fragments can be released into the serum by proteolysis (PubMed:16505478).</text>
</comment>
<comment type="alternative products">
    <event type="alternative splicing"/>
    <isoform>
        <id>Q86YW5-1</id>
        <name>1</name>
        <sequence type="displayed"/>
    </isoform>
    <isoform>
        <id>Q86YW5-2</id>
        <name>2</name>
        <name>TLT1sv</name>
        <sequence type="described" ref="VSP_021125 VSP_021126"/>
    </isoform>
    <isoform>
        <id>Q86YW5-3</id>
        <name>3</name>
        <sequence type="described" ref="VSP_021124"/>
    </isoform>
</comment>
<comment type="tissue specificity">
    <text evidence="4 5 6 7">Detected in platelets, monocytic leukemia and in T-cell leukemia.</text>
</comment>
<comment type="PTM">
    <text evidence="6">Phosphorylated on tyrosine residues.</text>
</comment>